<accession>Q4WNY4</accession>
<proteinExistence type="inferred from homology"/>
<evidence type="ECO:0000250" key="1"/>
<evidence type="ECO:0000256" key="2">
    <source>
        <dbReference type="SAM" id="MobiDB-lite"/>
    </source>
</evidence>
<evidence type="ECO:0000305" key="3"/>
<reference key="1">
    <citation type="journal article" date="2005" name="Nature">
        <title>Genomic sequence of the pathogenic and allergenic filamentous fungus Aspergillus fumigatus.</title>
        <authorList>
            <person name="Nierman W.C."/>
            <person name="Pain A."/>
            <person name="Anderson M.J."/>
            <person name="Wortman J.R."/>
            <person name="Kim H.S."/>
            <person name="Arroyo J."/>
            <person name="Berriman M."/>
            <person name="Abe K."/>
            <person name="Archer D.B."/>
            <person name="Bermejo C."/>
            <person name="Bennett J.W."/>
            <person name="Bowyer P."/>
            <person name="Chen D."/>
            <person name="Collins M."/>
            <person name="Coulsen R."/>
            <person name="Davies R."/>
            <person name="Dyer P.S."/>
            <person name="Farman M.L."/>
            <person name="Fedorova N."/>
            <person name="Fedorova N.D."/>
            <person name="Feldblyum T.V."/>
            <person name="Fischer R."/>
            <person name="Fosker N."/>
            <person name="Fraser A."/>
            <person name="Garcia J.L."/>
            <person name="Garcia M.J."/>
            <person name="Goble A."/>
            <person name="Goldman G.H."/>
            <person name="Gomi K."/>
            <person name="Griffith-Jones S."/>
            <person name="Gwilliam R."/>
            <person name="Haas B.J."/>
            <person name="Haas H."/>
            <person name="Harris D.E."/>
            <person name="Horiuchi H."/>
            <person name="Huang J."/>
            <person name="Humphray S."/>
            <person name="Jimenez J."/>
            <person name="Keller N."/>
            <person name="Khouri H."/>
            <person name="Kitamoto K."/>
            <person name="Kobayashi T."/>
            <person name="Konzack S."/>
            <person name="Kulkarni R."/>
            <person name="Kumagai T."/>
            <person name="Lafton A."/>
            <person name="Latge J.-P."/>
            <person name="Li W."/>
            <person name="Lord A."/>
            <person name="Lu C."/>
            <person name="Majoros W.H."/>
            <person name="May G.S."/>
            <person name="Miller B.L."/>
            <person name="Mohamoud Y."/>
            <person name="Molina M."/>
            <person name="Monod M."/>
            <person name="Mouyna I."/>
            <person name="Mulligan S."/>
            <person name="Murphy L.D."/>
            <person name="O'Neil S."/>
            <person name="Paulsen I."/>
            <person name="Penalva M.A."/>
            <person name="Pertea M."/>
            <person name="Price C."/>
            <person name="Pritchard B.L."/>
            <person name="Quail M.A."/>
            <person name="Rabbinowitsch E."/>
            <person name="Rawlins N."/>
            <person name="Rajandream M.A."/>
            <person name="Reichard U."/>
            <person name="Renauld H."/>
            <person name="Robson G.D."/>
            <person name="Rodriguez de Cordoba S."/>
            <person name="Rodriguez-Pena J.M."/>
            <person name="Ronning C.M."/>
            <person name="Rutter S."/>
            <person name="Salzberg S.L."/>
            <person name="Sanchez M."/>
            <person name="Sanchez-Ferrero J.C."/>
            <person name="Saunders D."/>
            <person name="Seeger K."/>
            <person name="Squares R."/>
            <person name="Squares S."/>
            <person name="Takeuchi M."/>
            <person name="Tekaia F."/>
            <person name="Turner G."/>
            <person name="Vazquez de Aldana C.R."/>
            <person name="Weidman J."/>
            <person name="White O."/>
            <person name="Woodward J.R."/>
            <person name="Yu J.-H."/>
            <person name="Fraser C.M."/>
            <person name="Galagan J.E."/>
            <person name="Asai K."/>
            <person name="Machida M."/>
            <person name="Hall N."/>
            <person name="Barrell B.G."/>
            <person name="Denning D.W."/>
        </authorList>
    </citation>
    <scope>NUCLEOTIDE SEQUENCE [LARGE SCALE GENOMIC DNA]</scope>
    <source>
        <strain>ATCC MYA-4609 / CBS 101355 / FGSC A1100 / Af293</strain>
    </source>
</reference>
<feature type="chain" id="PRO_0000076336" description="SWR1-complex protein 4">
    <location>
        <begin position="1"/>
        <end position="588"/>
    </location>
</feature>
<feature type="domain" description="SANT">
    <location>
        <begin position="154"/>
        <end position="224"/>
    </location>
</feature>
<feature type="region of interest" description="Disordered" evidence="2">
    <location>
        <begin position="1"/>
        <end position="40"/>
    </location>
</feature>
<feature type="region of interest" description="Disordered" evidence="2">
    <location>
        <begin position="345"/>
        <end position="403"/>
    </location>
</feature>
<feature type="region of interest" description="Disordered" evidence="2">
    <location>
        <begin position="498"/>
        <end position="588"/>
    </location>
</feature>
<feature type="compositionally biased region" description="Basic and acidic residues" evidence="2">
    <location>
        <begin position="1"/>
        <end position="10"/>
    </location>
</feature>
<feature type="compositionally biased region" description="Polar residues" evidence="2">
    <location>
        <begin position="353"/>
        <end position="365"/>
    </location>
</feature>
<feature type="compositionally biased region" description="Low complexity" evidence="2">
    <location>
        <begin position="373"/>
        <end position="392"/>
    </location>
</feature>
<feature type="compositionally biased region" description="Basic and acidic residues" evidence="2">
    <location>
        <begin position="498"/>
        <end position="520"/>
    </location>
</feature>
<feature type="compositionally biased region" description="Low complexity" evidence="2">
    <location>
        <begin position="524"/>
        <end position="535"/>
    </location>
</feature>
<feature type="compositionally biased region" description="Basic and acidic residues" evidence="2">
    <location>
        <begin position="538"/>
        <end position="548"/>
    </location>
</feature>
<organism>
    <name type="scientific">Aspergillus fumigatus (strain ATCC MYA-4609 / CBS 101355 / FGSC A1100 / Af293)</name>
    <name type="common">Neosartorya fumigata</name>
    <dbReference type="NCBI Taxonomy" id="330879"/>
    <lineage>
        <taxon>Eukaryota</taxon>
        <taxon>Fungi</taxon>
        <taxon>Dikarya</taxon>
        <taxon>Ascomycota</taxon>
        <taxon>Pezizomycotina</taxon>
        <taxon>Eurotiomycetes</taxon>
        <taxon>Eurotiomycetidae</taxon>
        <taxon>Eurotiales</taxon>
        <taxon>Aspergillaceae</taxon>
        <taxon>Aspergillus</taxon>
        <taxon>Aspergillus subgen. Fumigati</taxon>
    </lineage>
</organism>
<sequence length="588" mass="65954">MAAADVRDMLDLPAEGQPRPHKKQKVVEKRPDTDVQASEGITRELYALLGERAPPIAINENRYKGRPKWMSKLRVRPWQMTPFTNNARSDGLVLRHWQRQSESAKAPALEGASEMEVDQAKAGGGAATPEKEYPFAKYNVKPRVPRRYTDEEYNRHLKSDDWSRQETDYLMDLVEEYDLRWVVIADRYDFQPQPIDAEANATALVPAKQYRTMEQMKARYYFIAASMLALEHPPSEMSEAEFDLHEKMMKFDPDRERARKELAALQLNRTADEVREEGILLEELKRITSNEQNFMTERRELYSRLEVPISVGNTTMYQSSQGLSQLLQTLLQADKSKKRRSILGPEAAAPSPAGQTPTSNAPTSARDSRADTPSHASAGPSSKKGSTAAAAKEPPQTVKTLTPAEEARYGVQHHDRLVPGVQFRSDRAQKLTQAKSNVQSQKLATALAELEIPPRLLMPTERVCKEFEKLIHSVNLLLDARKVSEKIESEIRVLEAAREERERKTKEVKDKGKPEVKSEEVENSDSGAGDSASAAPTADERADERADKGLQGAEDPDQSTGDRDGVSHKRSASVLSNGSDKSTKRQKK</sequence>
<comment type="function">
    <text evidence="1">Component of the SWR1 complex which mediates the ATP-dependent exchange of histone H2A for the H2A variant HZT1 leading to transcriptional regulation of selected genes by chromatin remodeling. Component of the NuA4 histone acetyltransferase complex which is involved in transcriptional activation of selected genes principally by acetylation of nucleosomal histone H4 and H2A. The NuA4 complex is also involved in DNA repair (By similarity).</text>
</comment>
<comment type="subunit">
    <text evidence="1">Component of the SWR1 chromatin-remodeling complex and of the NuA4 histone acetyltransferase complex.</text>
</comment>
<comment type="subcellular location">
    <subcellularLocation>
        <location evidence="1">Nucleus</location>
    </subcellularLocation>
</comment>
<comment type="similarity">
    <text evidence="3">Belongs to the SWC4 family.</text>
</comment>
<keyword id="KW-0010">Activator</keyword>
<keyword id="KW-0156">Chromatin regulator</keyword>
<keyword id="KW-0227">DNA damage</keyword>
<keyword id="KW-0234">DNA repair</keyword>
<keyword id="KW-0539">Nucleus</keyword>
<keyword id="KW-1185">Reference proteome</keyword>
<keyword id="KW-0804">Transcription</keyword>
<keyword id="KW-0805">Transcription regulation</keyword>
<name>SWC4_ASPFU</name>
<protein>
    <recommendedName>
        <fullName>SWR1-complex protein 4</fullName>
    </recommendedName>
</protein>
<gene>
    <name type="primary">swc4</name>
    <name type="ORF">AFUA_4G07380</name>
</gene>
<dbReference type="EMBL" id="AAHF01000005">
    <property type="protein sequence ID" value="EAL90050.1"/>
    <property type="molecule type" value="Genomic_DNA"/>
</dbReference>
<dbReference type="RefSeq" id="XP_752088.1">
    <property type="nucleotide sequence ID" value="XM_746995.1"/>
</dbReference>
<dbReference type="SMR" id="Q4WNY4"/>
<dbReference type="FunCoup" id="Q4WNY4">
    <property type="interactions" value="941"/>
</dbReference>
<dbReference type="STRING" id="330879.Q4WNY4"/>
<dbReference type="EnsemblFungi" id="EAL90050">
    <property type="protein sequence ID" value="EAL90050"/>
    <property type="gene ID" value="AFUA_4G07380"/>
</dbReference>
<dbReference type="GeneID" id="3509459"/>
<dbReference type="KEGG" id="afm:AFUA_4G07380"/>
<dbReference type="eggNOG" id="KOG2656">
    <property type="taxonomic scope" value="Eukaryota"/>
</dbReference>
<dbReference type="HOGENOM" id="CLU_018539_3_1_1"/>
<dbReference type="InParanoid" id="Q4WNY4"/>
<dbReference type="OMA" id="GNTTMYQ"/>
<dbReference type="OrthoDB" id="19740at2759"/>
<dbReference type="Proteomes" id="UP000002530">
    <property type="component" value="Chromosome 4"/>
</dbReference>
<dbReference type="GO" id="GO:0035267">
    <property type="term" value="C:NuA4 histone acetyltransferase complex"/>
    <property type="evidence" value="ECO:0000318"/>
    <property type="project" value="GO_Central"/>
</dbReference>
<dbReference type="GO" id="GO:0000812">
    <property type="term" value="C:Swr1 complex"/>
    <property type="evidence" value="ECO:0000318"/>
    <property type="project" value="GO_Central"/>
</dbReference>
<dbReference type="GO" id="GO:0003714">
    <property type="term" value="F:transcription corepressor activity"/>
    <property type="evidence" value="ECO:0000318"/>
    <property type="project" value="GO_Central"/>
</dbReference>
<dbReference type="GO" id="GO:0006338">
    <property type="term" value="P:chromatin remodeling"/>
    <property type="evidence" value="ECO:0007669"/>
    <property type="project" value="InterPro"/>
</dbReference>
<dbReference type="GO" id="GO:0006281">
    <property type="term" value="P:DNA repair"/>
    <property type="evidence" value="ECO:0007669"/>
    <property type="project" value="UniProtKB-KW"/>
</dbReference>
<dbReference type="GO" id="GO:0000122">
    <property type="term" value="P:negative regulation of transcription by RNA polymerase II"/>
    <property type="evidence" value="ECO:0000318"/>
    <property type="project" value="GO_Central"/>
</dbReference>
<dbReference type="FunFam" id="1.10.10.60:FF:000432">
    <property type="entry name" value="SWR1-complex protein 4"/>
    <property type="match status" value="1"/>
</dbReference>
<dbReference type="Gene3D" id="1.10.10.60">
    <property type="entry name" value="Homeodomain-like"/>
    <property type="match status" value="1"/>
</dbReference>
<dbReference type="InterPro" id="IPR032563">
    <property type="entry name" value="DAMP1_SANT-like"/>
</dbReference>
<dbReference type="InterPro" id="IPR001005">
    <property type="entry name" value="SANT/Myb"/>
</dbReference>
<dbReference type="InterPro" id="IPR027109">
    <property type="entry name" value="Swc4/Dmap1"/>
</dbReference>
<dbReference type="PANTHER" id="PTHR12855:SF10">
    <property type="entry name" value="DNA METHYLTRANSFERASE 1-ASSOCIATED PROTEIN 1"/>
    <property type="match status" value="1"/>
</dbReference>
<dbReference type="PANTHER" id="PTHR12855">
    <property type="entry name" value="DNA METHYLTRANSFERASE 1-ASSOCIATED PROTEIN 1 FAMILY MEMBER"/>
    <property type="match status" value="1"/>
</dbReference>
<dbReference type="Pfam" id="PF16282">
    <property type="entry name" value="SANT_DAMP1_like"/>
    <property type="match status" value="1"/>
</dbReference>